<reference key="1">
    <citation type="journal article" date="1994" name="J. Gen. Virol.">
        <title>Nucleotide sequence comparisons of the fusion protein gene from virulent and attenuated strains of rinderpest virus.</title>
        <authorList>
            <person name="Evans S.A."/>
            <person name="Baron M.D."/>
            <person name="Chamberlain R.W."/>
            <person name="Goatley L."/>
            <person name="Barrett T."/>
        </authorList>
    </citation>
    <scope>NUCLEOTIDE SEQUENCE [GENOMIC RNA]</scope>
</reference>
<feature type="signal peptide" evidence="3">
    <location>
        <begin position="1"/>
        <end position="19"/>
    </location>
</feature>
<feature type="chain" id="PRO_0000039360" description="Fusion glycoprotein F0">
    <location>
        <begin position="20"/>
        <end position="546"/>
    </location>
</feature>
<feature type="chain" id="PRO_0000039361" description="Fusion glycoprotein F2">
    <location>
        <begin position="20"/>
        <end position="108"/>
    </location>
</feature>
<feature type="chain" id="PRO_0000039362" description="Fusion glycoprotein F1">
    <location>
        <begin position="109"/>
        <end position="546"/>
    </location>
</feature>
<feature type="topological domain" description="Extracellular" evidence="1">
    <location>
        <begin position="20"/>
        <end position="491"/>
    </location>
</feature>
<feature type="transmembrane region" description="Helical" evidence="1">
    <location>
        <begin position="492"/>
        <end position="512"/>
    </location>
</feature>
<feature type="topological domain" description="Cytoplasmic" evidence="1">
    <location>
        <begin position="513"/>
        <end position="546"/>
    </location>
</feature>
<feature type="region of interest" description="Fusion peptide" evidence="1">
    <location>
        <begin position="109"/>
        <end position="133"/>
    </location>
</feature>
<feature type="coiled-coil region" evidence="3">
    <location>
        <begin position="134"/>
        <end position="162"/>
    </location>
</feature>
<feature type="coiled-coil region" evidence="3">
    <location>
        <begin position="458"/>
        <end position="483"/>
    </location>
</feature>
<feature type="site" description="Cleavage; by host" evidence="1">
    <location>
        <begin position="108"/>
        <end position="109"/>
    </location>
</feature>
<feature type="glycosylation site" description="N-linked (GlcNAc...) asparagine; by host" evidence="2">
    <location>
        <position position="25"/>
    </location>
</feature>
<feature type="glycosylation site" description="N-linked (GlcNAc...) asparagine; by host" evidence="2">
    <location>
        <position position="57"/>
    </location>
</feature>
<feature type="glycosylation site" description="N-linked (GlcNAc...) asparagine; by host" evidence="3">
    <location>
        <position position="63"/>
    </location>
</feature>
<feature type="disulfide bond" description="Interchain (with C-195)" evidence="2">
    <location>
        <position position="64"/>
    </location>
</feature>
<feature type="disulfide bond" description="Interchain (with C-68)" evidence="2">
    <location>
        <position position="191"/>
    </location>
</feature>
<feature type="disulfide bond" evidence="2">
    <location>
        <begin position="330"/>
        <end position="339"/>
    </location>
</feature>
<feature type="disulfide bond" evidence="2">
    <location>
        <begin position="354"/>
        <end position="362"/>
    </location>
</feature>
<feature type="disulfide bond" evidence="2">
    <location>
        <begin position="386"/>
        <end position="391"/>
    </location>
</feature>
<feature type="disulfide bond" evidence="2">
    <location>
        <begin position="393"/>
        <end position="416"/>
    </location>
</feature>
<comment type="function">
    <text evidence="1">Class I viral fusion protein. Under the current model, the protein has at least 3 conformational states: pre-fusion native state, pre-hairpin intermediate state, and post-fusion hairpin state. During viral and plasma cell membrane fusion, the heptad repeat (HR) regions assume a trimer-of-hairpins structure, positioning the fusion peptide in close proximity to the C-terminal region of the ectodomain. The formation of this structure appears to drive apposition and subsequent fusion of viral and plasma cell membranes. Directs fusion of viral and cellular membranes leading to delivery of the nucleocapsid into the cytoplasm. This fusion is pH independent and occurs directly at the outer cell membrane. The trimer of F1-F2 (F protein) probably interacts with HN at the virion surface. Upon HN binding to its cellular receptor, the hydrophobic fusion peptide is unmasked and interacts with the cellular membrane, inducing the fusion between cell and virion membranes. Later in infection, F proteins expressed at the plasma membrane of infected cells could mediate fusion with adjacent cells to form syncytia, a cytopathic effect that could lead to tissue necrosis (By similarity).</text>
</comment>
<comment type="subunit">
    <text evidence="1">Homotrimer of disulfide-linked F1-F2.</text>
</comment>
<comment type="subcellular location">
    <subcellularLocation>
        <location evidence="1">Virion membrane</location>
        <topology evidence="1">Single-pass type I membrane protein</topology>
    </subcellularLocation>
    <subcellularLocation>
        <location evidence="1">Host cell membrane</location>
        <topology evidence="1">Single-pass membrane protein</topology>
    </subcellularLocation>
</comment>
<comment type="PTM">
    <text evidence="1">The inactive precursor F0 is glycosylated and proteolytically cleaved into F1 and F2 to be functionally active. The cleavage is mediated by cellular proteases during the transport and maturation of the polypeptide (By similarity).</text>
</comment>
<comment type="similarity">
    <text evidence="4">Belongs to the paramyxoviruses fusion glycoprotein family.</text>
</comment>
<protein>
    <recommendedName>
        <fullName>Fusion glycoprotein F0</fullName>
    </recommendedName>
    <component>
        <recommendedName>
            <fullName>Fusion glycoprotein F2</fullName>
        </recommendedName>
    </component>
    <component>
        <recommendedName>
            <fullName>Fusion glycoprotein F1</fullName>
        </recommendedName>
    </component>
</protein>
<evidence type="ECO:0000250" key="1"/>
<evidence type="ECO:0000250" key="2">
    <source>
        <dbReference type="UniProtKB" id="Q786F3"/>
    </source>
</evidence>
<evidence type="ECO:0000255" key="3"/>
<evidence type="ECO:0000305" key="4"/>
<accession>P41356</accession>
<name>FUS_RINDR</name>
<sequence>MKILFATLLVVTTPHLVTGQIHWGNLSKIGVVGTGSASYKVMTQSSHQTLVIKLMPNITAIDNCTKTEIEEYKRLLGTVLQPIKVALNAITKNIKPIKSSTTSRRHRRFAGVALAGAALGVATAAQITAGIALHQSMMNTQAIESLKASLETTNQAIEEIRQAGQEMILAVQGVQDYINNELVPAMGQLSCDIVGQKLGLKLLRYYTEILSLFGPSLRDPISAEISIQALSYALGGDINKILEKLGYSGSDLLAILESKGIKAKITYVDIESYFIVLSIAYPSLSEIKGVIIHRLEGVSYNIGSQEWYTTVPRYVATQGYLISNFDDTPCAFSPEGTICSQNALYPMSPLLQECFRGSTRSCARTLVSGSIGNRFILSKGNLIANCASILCKCYTTGSIISQDPDKILTYIAADQCPIVEVDGVTIQVGSREYPDAVYLHKIDLGPPISLEKLDVGTNLGNAVTKLEKAKDLLDSSDLILETIKGASVTNTGHILVGAGLIAVVGILIVTCCCRKRSNDSKVSTVILNPGLKPDLTGTSKSYVRSL</sequence>
<organism>
    <name type="scientific">Rinderpest virus (strain RBOK)</name>
    <name type="common">RDV</name>
    <dbReference type="NCBI Taxonomy" id="36409"/>
    <lineage>
        <taxon>Viruses</taxon>
        <taxon>Riboviria</taxon>
        <taxon>Orthornavirae</taxon>
        <taxon>Negarnaviricota</taxon>
        <taxon>Haploviricotina</taxon>
        <taxon>Monjiviricetes</taxon>
        <taxon>Mononegavirales</taxon>
        <taxon>Paramyxoviridae</taxon>
        <taxon>Orthoparamyxovirinae</taxon>
        <taxon>Morbillivirus</taxon>
        <taxon>Morbillivirus pecoris</taxon>
        <taxon>Rinderpest morbillivirus</taxon>
    </lineage>
</organism>
<dbReference type="EMBL" id="Z30700">
    <property type="protein sequence ID" value="CAA83186.1"/>
    <property type="molecule type" value="Genomic_RNA"/>
</dbReference>
<dbReference type="EMBL" id="Z30697">
    <property type="protein sequence ID" value="CAA83181.1"/>
    <property type="molecule type" value="Genomic_RNA"/>
</dbReference>
<dbReference type="PIR" id="S47305">
    <property type="entry name" value="S47305"/>
</dbReference>
<dbReference type="SMR" id="P41356"/>
<dbReference type="GlyCosmos" id="P41356">
    <property type="glycosylation" value="3 sites, No reported glycans"/>
</dbReference>
<dbReference type="Proteomes" id="UP000008654">
    <property type="component" value="Genome"/>
</dbReference>
<dbReference type="GO" id="GO:0020002">
    <property type="term" value="C:host cell plasma membrane"/>
    <property type="evidence" value="ECO:0007669"/>
    <property type="project" value="UniProtKB-SubCell"/>
</dbReference>
<dbReference type="GO" id="GO:0016020">
    <property type="term" value="C:membrane"/>
    <property type="evidence" value="ECO:0007669"/>
    <property type="project" value="UniProtKB-KW"/>
</dbReference>
<dbReference type="GO" id="GO:0019031">
    <property type="term" value="C:viral envelope"/>
    <property type="evidence" value="ECO:0007669"/>
    <property type="project" value="UniProtKB-KW"/>
</dbReference>
<dbReference type="GO" id="GO:0055036">
    <property type="term" value="C:virion membrane"/>
    <property type="evidence" value="ECO:0007669"/>
    <property type="project" value="UniProtKB-SubCell"/>
</dbReference>
<dbReference type="GO" id="GO:0019064">
    <property type="term" value="P:fusion of virus membrane with host plasma membrane"/>
    <property type="evidence" value="ECO:0007669"/>
    <property type="project" value="UniProtKB-KW"/>
</dbReference>
<dbReference type="GO" id="GO:0046718">
    <property type="term" value="P:symbiont entry into host cell"/>
    <property type="evidence" value="ECO:0007669"/>
    <property type="project" value="UniProtKB-KW"/>
</dbReference>
<dbReference type="Gene3D" id="1.10.287.2480">
    <property type="match status" value="1"/>
</dbReference>
<dbReference type="Gene3D" id="6.10.10.110">
    <property type="match status" value="1"/>
</dbReference>
<dbReference type="Gene3D" id="2.60.40.1690">
    <property type="entry name" value="Head and neck region of the ectodomain of NDV fusion glycoprotein"/>
    <property type="match status" value="1"/>
</dbReference>
<dbReference type="Gene3D" id="2.40.490.10">
    <property type="entry name" value="Newcastle disease virus like domain"/>
    <property type="match status" value="1"/>
</dbReference>
<dbReference type="InterPro" id="IPR000776">
    <property type="entry name" value="Fusion_F0_Paramyxovir"/>
</dbReference>
<dbReference type="Pfam" id="PF00523">
    <property type="entry name" value="Fusion_gly"/>
    <property type="match status" value="1"/>
</dbReference>
<dbReference type="SUPFAM" id="SSF69922">
    <property type="entry name" value="Head and neck region of the ectodomain of NDV fusion glycoprotein"/>
    <property type="match status" value="1"/>
</dbReference>
<dbReference type="SUPFAM" id="SSF58069">
    <property type="entry name" value="Virus ectodomain"/>
    <property type="match status" value="1"/>
</dbReference>
<gene>
    <name type="primary">F</name>
</gene>
<proteinExistence type="inferred from homology"/>
<keyword id="KW-0165">Cleavage on pair of basic residues</keyword>
<keyword id="KW-0175">Coiled coil</keyword>
<keyword id="KW-1015">Disulfide bond</keyword>
<keyword id="KW-1169">Fusion of virus membrane with host cell membrane</keyword>
<keyword id="KW-1168">Fusion of virus membrane with host membrane</keyword>
<keyword id="KW-0325">Glycoprotein</keyword>
<keyword id="KW-1032">Host cell membrane</keyword>
<keyword id="KW-1043">Host membrane</keyword>
<keyword id="KW-0472">Membrane</keyword>
<keyword id="KW-1185">Reference proteome</keyword>
<keyword id="KW-0732">Signal</keyword>
<keyword id="KW-0812">Transmembrane</keyword>
<keyword id="KW-1133">Transmembrane helix</keyword>
<keyword id="KW-0261">Viral envelope protein</keyword>
<keyword id="KW-1162">Viral penetration into host cytoplasm</keyword>
<keyword id="KW-0946">Virion</keyword>
<keyword id="KW-1160">Virus entry into host cell</keyword>
<organismHost>
    <name type="scientific">Bos indicus</name>
    <name type="common">Zebu</name>
    <dbReference type="NCBI Taxonomy" id="9915"/>
</organismHost>
<organismHost>
    <name type="scientific">Bos taurus</name>
    <name type="common">Bovine</name>
    <dbReference type="NCBI Taxonomy" id="9913"/>
</organismHost>
<organismHost>
    <name type="scientific">Bubalus bubalis</name>
    <name type="common">Domestic water buffalo</name>
    <dbReference type="NCBI Taxonomy" id="89462"/>
</organismHost>
<organismHost>
    <name type="scientific">Capra hircus</name>
    <name type="common">Goat</name>
    <dbReference type="NCBI Taxonomy" id="9925"/>
</organismHost>
<organismHost>
    <name type="scientific">Gazella</name>
    <name type="common">gazelles</name>
    <dbReference type="NCBI Taxonomy" id="9933"/>
</organismHost>
<organismHost>
    <name type="scientific">Giraffa camelopardalis</name>
    <name type="common">Giraffe</name>
    <dbReference type="NCBI Taxonomy" id="9894"/>
</organismHost>
<organismHost>
    <name type="scientific">Hippopotamus</name>
    <dbReference type="NCBI Taxonomy" id="9832"/>
</organismHost>
<organismHost>
    <name type="scientific">Ovis aries</name>
    <name type="common">Sheep</name>
    <dbReference type="NCBI Taxonomy" id="9940"/>
</organismHost>
<organismHost>
    <name type="scientific">Suidae</name>
    <name type="common">pigs</name>
    <dbReference type="NCBI Taxonomy" id="9821"/>
</organismHost>